<dbReference type="EC" id="3.6.4.12"/>
<dbReference type="EMBL" id="Z29368">
    <property type="protein sequence ID" value="CAA82556.2"/>
    <property type="molecule type" value="mRNA"/>
</dbReference>
<dbReference type="PIR" id="S52247">
    <property type="entry name" value="S52247"/>
</dbReference>
<dbReference type="SMR" id="Q43704"/>
<dbReference type="FunCoup" id="Q43704">
    <property type="interactions" value="2966"/>
</dbReference>
<dbReference type="STRING" id="4577.Q43704"/>
<dbReference type="MaizeGDB" id="131629"/>
<dbReference type="InParanoid" id="Q43704"/>
<dbReference type="Proteomes" id="UP000007305">
    <property type="component" value="Unplaced"/>
</dbReference>
<dbReference type="ExpressionAtlas" id="Q43704">
    <property type="expression patterns" value="baseline and differential"/>
</dbReference>
<dbReference type="GO" id="GO:0042555">
    <property type="term" value="C:MCM complex"/>
    <property type="evidence" value="ECO:0000318"/>
    <property type="project" value="GO_Central"/>
</dbReference>
<dbReference type="GO" id="GO:0005634">
    <property type="term" value="C:nucleus"/>
    <property type="evidence" value="ECO:0000318"/>
    <property type="project" value="GO_Central"/>
</dbReference>
<dbReference type="GO" id="GO:0005524">
    <property type="term" value="F:ATP binding"/>
    <property type="evidence" value="ECO:0007669"/>
    <property type="project" value="UniProtKB-KW"/>
</dbReference>
<dbReference type="GO" id="GO:0016887">
    <property type="term" value="F:ATP hydrolysis activity"/>
    <property type="evidence" value="ECO:0007669"/>
    <property type="project" value="InterPro"/>
</dbReference>
<dbReference type="GO" id="GO:0004386">
    <property type="term" value="F:helicase activity"/>
    <property type="evidence" value="ECO:0007669"/>
    <property type="project" value="UniProtKB-KW"/>
</dbReference>
<dbReference type="GO" id="GO:0003697">
    <property type="term" value="F:single-stranded DNA binding"/>
    <property type="evidence" value="ECO:0000318"/>
    <property type="project" value="GO_Central"/>
</dbReference>
<dbReference type="GO" id="GO:0006271">
    <property type="term" value="P:DNA strand elongation involved in DNA replication"/>
    <property type="evidence" value="ECO:0000318"/>
    <property type="project" value="GO_Central"/>
</dbReference>
<dbReference type="GO" id="GO:0000727">
    <property type="term" value="P:double-strand break repair via break-induced replication"/>
    <property type="evidence" value="ECO:0000318"/>
    <property type="project" value="GO_Central"/>
</dbReference>
<dbReference type="GO" id="GO:1902975">
    <property type="term" value="P:mitotic DNA replication initiation"/>
    <property type="evidence" value="ECO:0000318"/>
    <property type="project" value="GO_Central"/>
</dbReference>
<dbReference type="CDD" id="cd17754">
    <property type="entry name" value="MCM3"/>
    <property type="match status" value="1"/>
</dbReference>
<dbReference type="FunFam" id="2.20.28.10:FF:000008">
    <property type="entry name" value="DNA helicase"/>
    <property type="match status" value="1"/>
</dbReference>
<dbReference type="FunFam" id="3.30.1640.10:FF:000012">
    <property type="entry name" value="DNA helicase"/>
    <property type="match status" value="1"/>
</dbReference>
<dbReference type="Gene3D" id="2.20.28.10">
    <property type="match status" value="1"/>
</dbReference>
<dbReference type="Gene3D" id="3.30.1640.10">
    <property type="entry name" value="mini-chromosome maintenance (MCM) complex, chain A, domain 1"/>
    <property type="match status" value="1"/>
</dbReference>
<dbReference type="Gene3D" id="2.40.50.140">
    <property type="entry name" value="Nucleic acid-binding proteins"/>
    <property type="match status" value="1"/>
</dbReference>
<dbReference type="Gene3D" id="3.40.50.300">
    <property type="entry name" value="P-loop containing nucleotide triphosphate hydrolases"/>
    <property type="match status" value="1"/>
</dbReference>
<dbReference type="InterPro" id="IPR003593">
    <property type="entry name" value="AAA+_ATPase"/>
</dbReference>
<dbReference type="InterPro" id="IPR031327">
    <property type="entry name" value="MCM"/>
</dbReference>
<dbReference type="InterPro" id="IPR008046">
    <property type="entry name" value="Mcm3"/>
</dbReference>
<dbReference type="InterPro" id="IPR018525">
    <property type="entry name" value="MCM_CS"/>
</dbReference>
<dbReference type="InterPro" id="IPR001208">
    <property type="entry name" value="MCM_dom"/>
</dbReference>
<dbReference type="InterPro" id="IPR041562">
    <property type="entry name" value="MCM_lid"/>
</dbReference>
<dbReference type="InterPro" id="IPR027925">
    <property type="entry name" value="MCM_N"/>
</dbReference>
<dbReference type="InterPro" id="IPR033762">
    <property type="entry name" value="MCM_OB"/>
</dbReference>
<dbReference type="InterPro" id="IPR012340">
    <property type="entry name" value="NA-bd_OB-fold"/>
</dbReference>
<dbReference type="InterPro" id="IPR027417">
    <property type="entry name" value="P-loop_NTPase"/>
</dbReference>
<dbReference type="InterPro" id="IPR056575">
    <property type="entry name" value="WH_MCM3_C"/>
</dbReference>
<dbReference type="PANTHER" id="PTHR11630">
    <property type="entry name" value="DNA REPLICATION LICENSING FACTOR MCM FAMILY MEMBER"/>
    <property type="match status" value="1"/>
</dbReference>
<dbReference type="PANTHER" id="PTHR11630:SF46">
    <property type="entry name" value="DNA REPLICATION LICENSING FACTOR MCM3-RELATED"/>
    <property type="match status" value="1"/>
</dbReference>
<dbReference type="Pfam" id="PF00493">
    <property type="entry name" value="MCM"/>
    <property type="match status" value="1"/>
</dbReference>
<dbReference type="Pfam" id="PF17855">
    <property type="entry name" value="MCM_lid"/>
    <property type="match status" value="1"/>
</dbReference>
<dbReference type="Pfam" id="PF14551">
    <property type="entry name" value="MCM_N"/>
    <property type="match status" value="1"/>
</dbReference>
<dbReference type="Pfam" id="PF17207">
    <property type="entry name" value="MCM_OB"/>
    <property type="match status" value="1"/>
</dbReference>
<dbReference type="Pfam" id="PF23191">
    <property type="entry name" value="WH_MCM3_C"/>
    <property type="match status" value="1"/>
</dbReference>
<dbReference type="PRINTS" id="PR01657">
    <property type="entry name" value="MCMFAMILY"/>
</dbReference>
<dbReference type="PRINTS" id="PR01659">
    <property type="entry name" value="MCMPROTEIN3"/>
</dbReference>
<dbReference type="SMART" id="SM00382">
    <property type="entry name" value="AAA"/>
    <property type="match status" value="1"/>
</dbReference>
<dbReference type="SMART" id="SM00350">
    <property type="entry name" value="MCM"/>
    <property type="match status" value="1"/>
</dbReference>
<dbReference type="SUPFAM" id="SSF50249">
    <property type="entry name" value="Nucleic acid-binding proteins"/>
    <property type="match status" value="1"/>
</dbReference>
<dbReference type="SUPFAM" id="SSF52540">
    <property type="entry name" value="P-loop containing nucleoside triphosphate hydrolases"/>
    <property type="match status" value="1"/>
</dbReference>
<dbReference type="PROSITE" id="PS00847">
    <property type="entry name" value="MCM_1"/>
    <property type="match status" value="1"/>
</dbReference>
<dbReference type="PROSITE" id="PS50051">
    <property type="entry name" value="MCM_2"/>
    <property type="match status" value="1"/>
</dbReference>
<comment type="function">
    <text evidence="1">Acts as a factor that allows the DNA to undergo a single round of replication per cell cycle. Required for DNA replication and cell proliferation (By similarity). May act as a component of the MCM complex which is the putative replicative helicase of the replication licensing system in eukaryotic cells.</text>
</comment>
<comment type="catalytic activity">
    <reaction>
        <text>ATP + H2O = ADP + phosphate + H(+)</text>
        <dbReference type="Rhea" id="RHEA:13065"/>
        <dbReference type="ChEBI" id="CHEBI:15377"/>
        <dbReference type="ChEBI" id="CHEBI:15378"/>
        <dbReference type="ChEBI" id="CHEBI:30616"/>
        <dbReference type="ChEBI" id="CHEBI:43474"/>
        <dbReference type="ChEBI" id="CHEBI:456216"/>
        <dbReference type="EC" id="3.6.4.12"/>
    </reaction>
</comment>
<comment type="subcellular location">
    <subcellularLocation>
        <location evidence="4">Nucleus</location>
    </subcellularLocation>
</comment>
<comment type="similarity">
    <text evidence="4">Belongs to the MCM family.</text>
</comment>
<reference key="1">
    <citation type="journal article" date="1999" name="J. Exp. Bot.">
        <title>cDNA and promoter sequences for MCM3 homologues from maize, and protein localization in cycling cells.</title>
        <authorList>
            <person name="Sabelli P.A."/>
            <person name="Parker J.S."/>
            <person name="Barlow P.W."/>
        </authorList>
    </citation>
    <scope>NUCLEOTIDE SEQUENCE [MRNA]</scope>
    <scope>SEQUENCE REVISION TO 475 AND 531</scope>
    <source>
        <strain>cv. LG11</strain>
        <tissue>Root</tissue>
    </source>
</reference>
<reference key="2">
    <citation type="journal article" date="1996" name="Mol. Gen. Genet.">
        <title>cDNA cloning and characterisation of a maize homologue of the MCM proteins required for the initiation of DNA replication.</title>
        <authorList>
            <person name="Sabelli P.A."/>
            <person name="Burgess S.R."/>
            <person name="Kush A.K."/>
            <person name="Young M.R."/>
            <person name="Shewry P.R."/>
        </authorList>
    </citation>
    <scope>NUCLEOTIDE SEQUENCE [MRNA] OF 169-768</scope>
    <source>
        <strain>cv. LG11</strain>
        <tissue>Root</tissue>
    </source>
</reference>
<organism>
    <name type="scientific">Zea mays</name>
    <name type="common">Maize</name>
    <dbReference type="NCBI Taxonomy" id="4577"/>
    <lineage>
        <taxon>Eukaryota</taxon>
        <taxon>Viridiplantae</taxon>
        <taxon>Streptophyta</taxon>
        <taxon>Embryophyta</taxon>
        <taxon>Tracheophyta</taxon>
        <taxon>Spermatophyta</taxon>
        <taxon>Magnoliopsida</taxon>
        <taxon>Liliopsida</taxon>
        <taxon>Poales</taxon>
        <taxon>Poaceae</taxon>
        <taxon>PACMAD clade</taxon>
        <taxon>Panicoideae</taxon>
        <taxon>Andropogonodae</taxon>
        <taxon>Andropogoneae</taxon>
        <taxon>Tripsacinae</taxon>
        <taxon>Zea</taxon>
    </lineage>
</organism>
<evidence type="ECO:0000250" key="1"/>
<evidence type="ECO:0000255" key="2"/>
<evidence type="ECO:0000256" key="3">
    <source>
        <dbReference type="SAM" id="MobiDB-lite"/>
    </source>
</evidence>
<evidence type="ECO:0000305" key="4"/>
<keyword id="KW-0067">ATP-binding</keyword>
<keyword id="KW-0131">Cell cycle</keyword>
<keyword id="KW-0235">DNA replication</keyword>
<keyword id="KW-0238">DNA-binding</keyword>
<keyword id="KW-0347">Helicase</keyword>
<keyword id="KW-0378">Hydrolase</keyword>
<keyword id="KW-0547">Nucleotide-binding</keyword>
<keyword id="KW-0539">Nucleus</keyword>
<keyword id="KW-1185">Reference proteome</keyword>
<protein>
    <recommendedName>
        <fullName>DNA replication licensing factor MCM3 homolog 1</fullName>
        <ecNumber>3.6.4.12</ecNumber>
    </recommendedName>
    <alternativeName>
        <fullName>Replication origin activator 1</fullName>
        <shortName>ROA-1</shortName>
    </alternativeName>
</protein>
<feature type="chain" id="PRO_0000194098" description="DNA replication licensing factor MCM3 homolog 1">
    <location>
        <begin position="1"/>
        <end position="768"/>
    </location>
</feature>
<feature type="domain" description="MCM">
    <location>
        <begin position="290"/>
        <end position="497"/>
    </location>
</feature>
<feature type="region of interest" description="Disordered" evidence="3">
    <location>
        <begin position="662"/>
        <end position="687"/>
    </location>
</feature>
<feature type="short sequence motif" description="Arginine finger">
    <location>
        <begin position="472"/>
        <end position="475"/>
    </location>
</feature>
<feature type="compositionally biased region" description="Gly residues" evidence="3">
    <location>
        <begin position="672"/>
        <end position="682"/>
    </location>
</feature>
<feature type="binding site" evidence="2">
    <location>
        <begin position="340"/>
        <end position="347"/>
    </location>
    <ligand>
        <name>ATP</name>
        <dbReference type="ChEBI" id="CHEBI:30616"/>
    </ligand>
</feature>
<proteinExistence type="evidence at transcript level"/>
<accession>Q43704</accession>
<sequence length="768" mass="85182">MEINEEAMAAHKRAFLDFLDQDVGKGVYMQAVRDMVQNKRHRLIIGMDDLRNHNLDLARRVIRTPGEYMQPASDAVSEVARNLDPKFLKEGERVMVGFSGPFGFHRVTPRDLMSSFIGTMVCVEGIVTKCSLVRPKVVKSVHFCPVTGDFLSREYRDITSFVGLPTGSVYPTRDDNGNLLVTEYGMCEYKDHQTLSMQEVPENSAPGQLPRTVDVIVEDDLVDCCKPGDRVSIVGVYKALPGKSKGSVSGVFRTVLIANNVSLLNKEANAPVYTREDLKRMKEISRRNDTFDLLGNSLAPSIYGHLWIKKAVVLLMLGGVEKNLKNGTHLRGDINMMMVGDPSVAKSQLLRAVMNIAPLAISTTGRGSSGVGLTAAVTSDQETGERRLEAGAMVLADRGVVCIDEFDKMNDQDRVAIHEVMEQQTVTIAKAGIHASLNARCSVIAAANPIYGTYDRSLTPTKNIGLPDSLLSRFDLLFIVLDQMDPEIDRQISEHVARMHRYCTDDGGARSLDKEGYAEEDDGDANAAIFVKYDRMLHGQDRRRGKKSKQDRLTVKFLKKYIHYAKNLIQPRLTDEASDHIATSYAELRDGSANAKSGGGTLPITARTLESIIRLSTAHAKMKLRHEVLKSDVEAALQVLNFAIYHKELTEMEEREQKEMEMKQQAEHDAGATGGTVDGHGSSGNDPMDVDVGSNDQNVSAERIEAFEALLGQHVLANHIDQMSIDEIEQMVNRESTAPYTRSQVEFILERMQDANRVMIRDGVVRII</sequence>
<name>MCM31_MAIZE</name>
<gene>
    <name type="primary">ROA1</name>
    <name type="synonym">ROA</name>
</gene>